<dbReference type="EC" id="3.5.1.47" evidence="1"/>
<dbReference type="EMBL" id="FM211187">
    <property type="protein sequence ID" value="CAR69859.1"/>
    <property type="molecule type" value="Genomic_DNA"/>
</dbReference>
<dbReference type="RefSeq" id="WP_000885102.1">
    <property type="nucleotide sequence ID" value="NC_011900.1"/>
</dbReference>
<dbReference type="SMR" id="B8ZPL8"/>
<dbReference type="KEGG" id="sne:SPN23F21200"/>
<dbReference type="HOGENOM" id="CLU_023257_0_1_9"/>
<dbReference type="UniPathway" id="UPA00034">
    <property type="reaction ID" value="UER00024"/>
</dbReference>
<dbReference type="GO" id="GO:0050118">
    <property type="term" value="F:N-acetyldiaminopimelate deacetylase activity"/>
    <property type="evidence" value="ECO:0007669"/>
    <property type="project" value="UniProtKB-UniRule"/>
</dbReference>
<dbReference type="GO" id="GO:0019877">
    <property type="term" value="P:diaminopimelate biosynthetic process"/>
    <property type="evidence" value="ECO:0007669"/>
    <property type="project" value="UniProtKB-UniRule"/>
</dbReference>
<dbReference type="GO" id="GO:0009089">
    <property type="term" value="P:lysine biosynthetic process via diaminopimelate"/>
    <property type="evidence" value="ECO:0007669"/>
    <property type="project" value="UniProtKB-UniRule"/>
</dbReference>
<dbReference type="CDD" id="cd05670">
    <property type="entry name" value="M20_Acy1_YkuR-like"/>
    <property type="match status" value="1"/>
</dbReference>
<dbReference type="FunFam" id="3.30.70.360:FF:000001">
    <property type="entry name" value="N-acetyldiaminopimelate deacetylase"/>
    <property type="match status" value="1"/>
</dbReference>
<dbReference type="Gene3D" id="3.30.70.360">
    <property type="match status" value="1"/>
</dbReference>
<dbReference type="Gene3D" id="3.40.630.10">
    <property type="entry name" value="Zn peptidases"/>
    <property type="match status" value="1"/>
</dbReference>
<dbReference type="HAMAP" id="MF_01692">
    <property type="entry name" value="DapEL"/>
    <property type="match status" value="1"/>
</dbReference>
<dbReference type="InterPro" id="IPR023905">
    <property type="entry name" value="AcetylDAP_deacetylase"/>
</dbReference>
<dbReference type="InterPro" id="IPR017439">
    <property type="entry name" value="Amidohydrolase"/>
</dbReference>
<dbReference type="InterPro" id="IPR036264">
    <property type="entry name" value="Bact_exopeptidase_dim_dom"/>
</dbReference>
<dbReference type="InterPro" id="IPR002933">
    <property type="entry name" value="Peptidase_M20"/>
</dbReference>
<dbReference type="InterPro" id="IPR011650">
    <property type="entry name" value="Peptidase_M20_dimer"/>
</dbReference>
<dbReference type="NCBIfam" id="TIGR01891">
    <property type="entry name" value="amidohydrolases"/>
    <property type="match status" value="1"/>
</dbReference>
<dbReference type="PANTHER" id="PTHR11014:SF98">
    <property type="entry name" value="N-ACETYLDIAMINOPIMELATE DEACETYLASE"/>
    <property type="match status" value="1"/>
</dbReference>
<dbReference type="PANTHER" id="PTHR11014">
    <property type="entry name" value="PEPTIDASE M20 FAMILY MEMBER"/>
    <property type="match status" value="1"/>
</dbReference>
<dbReference type="Pfam" id="PF07687">
    <property type="entry name" value="M20_dimer"/>
    <property type="match status" value="1"/>
</dbReference>
<dbReference type="Pfam" id="PF01546">
    <property type="entry name" value="Peptidase_M20"/>
    <property type="match status" value="1"/>
</dbReference>
<dbReference type="PIRSF" id="PIRSF005962">
    <property type="entry name" value="Pept_M20D_amidohydro"/>
    <property type="match status" value="1"/>
</dbReference>
<dbReference type="SUPFAM" id="SSF55031">
    <property type="entry name" value="Bacterial exopeptidase dimerisation domain"/>
    <property type="match status" value="1"/>
</dbReference>
<dbReference type="SUPFAM" id="SSF53187">
    <property type="entry name" value="Zn-dependent exopeptidases"/>
    <property type="match status" value="1"/>
</dbReference>
<comment type="function">
    <text evidence="1">Catalyzes the conversion of N-acetyl-diaminopimelate to diaminopimelate and acetate.</text>
</comment>
<comment type="catalytic activity">
    <reaction evidence="1">
        <text>N-acetyl-(2S,6S)-2,6-diaminopimelate + H2O = (2S,6S)-2,6-diaminopimelate + acetate</text>
        <dbReference type="Rhea" id="RHEA:20405"/>
        <dbReference type="ChEBI" id="CHEBI:15377"/>
        <dbReference type="ChEBI" id="CHEBI:30089"/>
        <dbReference type="ChEBI" id="CHEBI:57609"/>
        <dbReference type="ChEBI" id="CHEBI:58767"/>
        <dbReference type="EC" id="3.5.1.47"/>
    </reaction>
</comment>
<comment type="pathway">
    <text evidence="1">Amino-acid biosynthesis; L-lysine biosynthesis via DAP pathway; LL-2,6-diaminopimelate from (S)-tetrahydrodipicolinate (acetylase route): step 3/3.</text>
</comment>
<comment type="similarity">
    <text evidence="1">Belongs to the peptidase M20A family. N-acetyldiaminopimelate deacetylase subfamily.</text>
</comment>
<reference key="1">
    <citation type="journal article" date="2009" name="J. Bacteriol.">
        <title>Role of conjugative elements in the evolution of the multidrug-resistant pandemic clone Streptococcus pneumoniae Spain23F ST81.</title>
        <authorList>
            <person name="Croucher N.J."/>
            <person name="Walker D."/>
            <person name="Romero P."/>
            <person name="Lennard N."/>
            <person name="Paterson G.K."/>
            <person name="Bason N.C."/>
            <person name="Mitchell A.M."/>
            <person name="Quail M.A."/>
            <person name="Andrew P.W."/>
            <person name="Parkhill J."/>
            <person name="Bentley S.D."/>
            <person name="Mitchell T.J."/>
        </authorList>
    </citation>
    <scope>NUCLEOTIDE SEQUENCE [LARGE SCALE GENOMIC DNA]</scope>
    <source>
        <strain>ATCC 700669 / Spain 23F-1</strain>
    </source>
</reference>
<name>DAPEL_STRPJ</name>
<evidence type="ECO:0000255" key="1">
    <source>
        <dbReference type="HAMAP-Rule" id="MF_01692"/>
    </source>
</evidence>
<protein>
    <recommendedName>
        <fullName evidence="1">N-acetyldiaminopimelate deacetylase</fullName>
        <ecNumber evidence="1">3.5.1.47</ecNumber>
    </recommendedName>
</protein>
<accession>B8ZPL8</accession>
<keyword id="KW-0028">Amino-acid biosynthesis</keyword>
<keyword id="KW-0220">Diaminopimelate biosynthesis</keyword>
<keyword id="KW-0378">Hydrolase</keyword>
<keyword id="KW-0457">Lysine biosynthesis</keyword>
<sequence>MLDLIQTRRDLHQIPEIGLEEFKTQAYLLDVIEKLTTGKDFVQIRTWRTGILVYLQGSQPERTIGWRTDIDGLPIVEQTGLPFASQHQGRMHACGHDFHMTIALGCLERALEEQPKNNLLFLFQPAEENEAGGMLMYEDDAFGDWLPDQFYGLHVRPDLKVGQIATNTHTLFAGTCEVKIRFKGKGGHAAFPHEANDALVAASYFVTQVQSVVSRNVNPIEGAVVTFGVFQAGTTNNVITDTAFLHGTIRALTQDMSLLVQKRVKTVAEGVAAAFDMEVEVELKQGGYLPVENNPALARELMDFFDEKDGIELIDIEPAMTGEDFGYLLSKVDGVMFWLGIDSPYALHHPQMSPKEEVLAIGVAAVSSFLKKKAAE</sequence>
<feature type="chain" id="PRO_0000376783" description="N-acetyldiaminopimelate deacetylase">
    <location>
        <begin position="1"/>
        <end position="376"/>
    </location>
</feature>
<feature type="active site" evidence="1">
    <location>
        <position position="69"/>
    </location>
</feature>
<feature type="active site" description="Proton acceptor" evidence="1">
    <location>
        <position position="128"/>
    </location>
</feature>
<proteinExistence type="inferred from homology"/>
<gene>
    <name type="ordered locus">SPN23F21200</name>
</gene>
<organism>
    <name type="scientific">Streptococcus pneumoniae (strain ATCC 700669 / Spain 23F-1)</name>
    <dbReference type="NCBI Taxonomy" id="561276"/>
    <lineage>
        <taxon>Bacteria</taxon>
        <taxon>Bacillati</taxon>
        <taxon>Bacillota</taxon>
        <taxon>Bacilli</taxon>
        <taxon>Lactobacillales</taxon>
        <taxon>Streptococcaceae</taxon>
        <taxon>Streptococcus</taxon>
    </lineage>
</organism>